<reference key="1">
    <citation type="journal article" date="2006" name="DNA Res.">
        <title>Genome sequence of the cat pathogen, Chlamydophila felis.</title>
        <authorList>
            <person name="Azuma Y."/>
            <person name="Hirakawa H."/>
            <person name="Yamashita A."/>
            <person name="Cai Y."/>
            <person name="Rahman M.A."/>
            <person name="Suzuki H."/>
            <person name="Mitaku S."/>
            <person name="Toh H."/>
            <person name="Goto S."/>
            <person name="Murakami T."/>
            <person name="Sugi K."/>
            <person name="Hayashi H."/>
            <person name="Fukushi H."/>
            <person name="Hattori M."/>
            <person name="Kuhara S."/>
            <person name="Shirai M."/>
        </authorList>
    </citation>
    <scope>NUCLEOTIDE SEQUENCE [LARGE SCALE GENOMIC DNA]</scope>
    <source>
        <strain>Fe/C-56</strain>
    </source>
</reference>
<accession>Q255E6</accession>
<dbReference type="EC" id="2.7.7.6" evidence="1"/>
<dbReference type="EMBL" id="AP006861">
    <property type="protein sequence ID" value="BAE81092.1"/>
    <property type="molecule type" value="Genomic_DNA"/>
</dbReference>
<dbReference type="RefSeq" id="WP_011457872.1">
    <property type="nucleotide sequence ID" value="NC_007899.1"/>
</dbReference>
<dbReference type="SMR" id="Q255E6"/>
<dbReference type="STRING" id="264202.CF0320"/>
<dbReference type="KEGG" id="cfe:CF0320"/>
<dbReference type="eggNOG" id="COG0085">
    <property type="taxonomic scope" value="Bacteria"/>
</dbReference>
<dbReference type="HOGENOM" id="CLU_000524_4_1_0"/>
<dbReference type="OrthoDB" id="9803954at2"/>
<dbReference type="Proteomes" id="UP000001260">
    <property type="component" value="Chromosome"/>
</dbReference>
<dbReference type="GO" id="GO:0000428">
    <property type="term" value="C:DNA-directed RNA polymerase complex"/>
    <property type="evidence" value="ECO:0007669"/>
    <property type="project" value="UniProtKB-KW"/>
</dbReference>
<dbReference type="GO" id="GO:0003677">
    <property type="term" value="F:DNA binding"/>
    <property type="evidence" value="ECO:0007669"/>
    <property type="project" value="UniProtKB-UniRule"/>
</dbReference>
<dbReference type="GO" id="GO:0003899">
    <property type="term" value="F:DNA-directed RNA polymerase activity"/>
    <property type="evidence" value="ECO:0007669"/>
    <property type="project" value="UniProtKB-UniRule"/>
</dbReference>
<dbReference type="GO" id="GO:0032549">
    <property type="term" value="F:ribonucleoside binding"/>
    <property type="evidence" value="ECO:0007669"/>
    <property type="project" value="InterPro"/>
</dbReference>
<dbReference type="GO" id="GO:0006351">
    <property type="term" value="P:DNA-templated transcription"/>
    <property type="evidence" value="ECO:0007669"/>
    <property type="project" value="UniProtKB-UniRule"/>
</dbReference>
<dbReference type="CDD" id="cd00653">
    <property type="entry name" value="RNA_pol_B_RPB2"/>
    <property type="match status" value="1"/>
</dbReference>
<dbReference type="FunFam" id="3.90.1800.10:FF:000001">
    <property type="entry name" value="DNA-directed RNA polymerase subunit beta"/>
    <property type="match status" value="1"/>
</dbReference>
<dbReference type="Gene3D" id="2.40.50.100">
    <property type="match status" value="1"/>
</dbReference>
<dbReference type="Gene3D" id="2.40.50.150">
    <property type="match status" value="1"/>
</dbReference>
<dbReference type="Gene3D" id="3.90.1100.10">
    <property type="match status" value="2"/>
</dbReference>
<dbReference type="Gene3D" id="2.30.150.10">
    <property type="entry name" value="DNA-directed RNA polymerase, beta subunit, external 1 domain"/>
    <property type="match status" value="1"/>
</dbReference>
<dbReference type="Gene3D" id="2.40.270.10">
    <property type="entry name" value="DNA-directed RNA polymerase, subunit 2, domain 6"/>
    <property type="match status" value="3"/>
</dbReference>
<dbReference type="Gene3D" id="3.90.1800.10">
    <property type="entry name" value="RNA polymerase alpha subunit dimerisation domain"/>
    <property type="match status" value="1"/>
</dbReference>
<dbReference type="Gene3D" id="3.90.1110.10">
    <property type="entry name" value="RNA polymerase Rpb2, domain 2"/>
    <property type="match status" value="2"/>
</dbReference>
<dbReference type="HAMAP" id="MF_01321">
    <property type="entry name" value="RNApol_bact_RpoB"/>
    <property type="match status" value="1"/>
</dbReference>
<dbReference type="InterPro" id="IPR042107">
    <property type="entry name" value="DNA-dir_RNA_pol_bsu_ext_1_sf"/>
</dbReference>
<dbReference type="InterPro" id="IPR019462">
    <property type="entry name" value="DNA-dir_RNA_pol_bsu_external_1"/>
</dbReference>
<dbReference type="InterPro" id="IPR015712">
    <property type="entry name" value="DNA-dir_RNA_pol_su2"/>
</dbReference>
<dbReference type="InterPro" id="IPR007120">
    <property type="entry name" value="DNA-dir_RNAP_su2_dom"/>
</dbReference>
<dbReference type="InterPro" id="IPR037033">
    <property type="entry name" value="DNA-dir_RNAP_su2_hyb_sf"/>
</dbReference>
<dbReference type="InterPro" id="IPR010243">
    <property type="entry name" value="RNA_pol_bsu_bac"/>
</dbReference>
<dbReference type="InterPro" id="IPR007121">
    <property type="entry name" value="RNA_pol_bsu_CS"/>
</dbReference>
<dbReference type="InterPro" id="IPR007644">
    <property type="entry name" value="RNA_pol_bsu_protrusion"/>
</dbReference>
<dbReference type="InterPro" id="IPR007642">
    <property type="entry name" value="RNA_pol_Rpb2_2"/>
</dbReference>
<dbReference type="InterPro" id="IPR037034">
    <property type="entry name" value="RNA_pol_Rpb2_2_sf"/>
</dbReference>
<dbReference type="InterPro" id="IPR007645">
    <property type="entry name" value="RNA_pol_Rpb2_3"/>
</dbReference>
<dbReference type="InterPro" id="IPR007641">
    <property type="entry name" value="RNA_pol_Rpb2_7"/>
</dbReference>
<dbReference type="InterPro" id="IPR014724">
    <property type="entry name" value="RNA_pol_RPB2_OB-fold"/>
</dbReference>
<dbReference type="NCBIfam" id="NF001616">
    <property type="entry name" value="PRK00405.1"/>
    <property type="match status" value="1"/>
</dbReference>
<dbReference type="NCBIfam" id="TIGR02013">
    <property type="entry name" value="rpoB"/>
    <property type="match status" value="1"/>
</dbReference>
<dbReference type="PANTHER" id="PTHR20856">
    <property type="entry name" value="DNA-DIRECTED RNA POLYMERASE I SUBUNIT 2"/>
    <property type="match status" value="1"/>
</dbReference>
<dbReference type="Pfam" id="PF04563">
    <property type="entry name" value="RNA_pol_Rpb2_1"/>
    <property type="match status" value="1"/>
</dbReference>
<dbReference type="Pfam" id="PF04561">
    <property type="entry name" value="RNA_pol_Rpb2_2"/>
    <property type="match status" value="2"/>
</dbReference>
<dbReference type="Pfam" id="PF04565">
    <property type="entry name" value="RNA_pol_Rpb2_3"/>
    <property type="match status" value="1"/>
</dbReference>
<dbReference type="Pfam" id="PF10385">
    <property type="entry name" value="RNA_pol_Rpb2_45"/>
    <property type="match status" value="1"/>
</dbReference>
<dbReference type="Pfam" id="PF00562">
    <property type="entry name" value="RNA_pol_Rpb2_6"/>
    <property type="match status" value="1"/>
</dbReference>
<dbReference type="Pfam" id="PF04560">
    <property type="entry name" value="RNA_pol_Rpb2_7"/>
    <property type="match status" value="1"/>
</dbReference>
<dbReference type="SUPFAM" id="SSF64484">
    <property type="entry name" value="beta and beta-prime subunits of DNA dependent RNA-polymerase"/>
    <property type="match status" value="1"/>
</dbReference>
<dbReference type="PROSITE" id="PS01166">
    <property type="entry name" value="RNA_POL_BETA"/>
    <property type="match status" value="1"/>
</dbReference>
<comment type="function">
    <text evidence="1">DNA-dependent RNA polymerase catalyzes the transcription of DNA into RNA using the four ribonucleoside triphosphates as substrates.</text>
</comment>
<comment type="catalytic activity">
    <reaction evidence="1">
        <text>RNA(n) + a ribonucleoside 5'-triphosphate = RNA(n+1) + diphosphate</text>
        <dbReference type="Rhea" id="RHEA:21248"/>
        <dbReference type="Rhea" id="RHEA-COMP:14527"/>
        <dbReference type="Rhea" id="RHEA-COMP:17342"/>
        <dbReference type="ChEBI" id="CHEBI:33019"/>
        <dbReference type="ChEBI" id="CHEBI:61557"/>
        <dbReference type="ChEBI" id="CHEBI:140395"/>
        <dbReference type="EC" id="2.7.7.6"/>
    </reaction>
</comment>
<comment type="subunit">
    <text evidence="1">The RNAP catalytic core consists of 2 alpha, 1 beta, 1 beta' and 1 omega subunit. When a sigma factor is associated with the core the holoenzyme is formed, which can initiate transcription.</text>
</comment>
<comment type="similarity">
    <text evidence="1">Belongs to the RNA polymerase beta chain family.</text>
</comment>
<evidence type="ECO:0000255" key="1">
    <source>
        <dbReference type="HAMAP-Rule" id="MF_01321"/>
    </source>
</evidence>
<name>RPOB_CHLFF</name>
<organism>
    <name type="scientific">Chlamydia felis (strain Fe/C-56)</name>
    <name type="common">Chlamydophila felis</name>
    <dbReference type="NCBI Taxonomy" id="264202"/>
    <lineage>
        <taxon>Bacteria</taxon>
        <taxon>Pseudomonadati</taxon>
        <taxon>Chlamydiota</taxon>
        <taxon>Chlamydiia</taxon>
        <taxon>Chlamydiales</taxon>
        <taxon>Chlamydiaceae</taxon>
        <taxon>Chlamydia/Chlamydophila group</taxon>
        <taxon>Chlamydia</taxon>
    </lineage>
</organism>
<sequence>MFKCPERVSVKKKEDILDLPNLIEIQIKSYKQFLQIGKLAEERDNVGLEEVFREIFPIKSYNEATILEYLSYNLGVPKYSPEECIRRGITYSVTLKVRFRLTDETGIKEEEVYMGTIPIMTDKGTFIINGAERVVVSQVHRSPGINFEQEKHSKGNILFSFRIIPYRGSWLEAIFDINDLIYIHIDRKKRRRKILAMTFIRALGYSSDADIIEEFFQIEECSLKSEKDFSVLVGKILADNVLDEASSLVYGKAGEKLSTAMLKRMLDADISTLKIALEADENHPIIKMLAKDPTDSYEAALKDFYRRLRPGEPATLANARSTIMRLFFDPKRYNLGRVGRYKLNRKLGFPMDEESLSQVTLRKEDVIGALKYLIRLKMGDEKASIDDIDHLANRRVRSVGELIQNQCRSGLARMEKIVRERMNLFDFSSDTLIPGKIISAKGLTSVLKDFFGRSQLSQFMDQTNPVAELTHKRRLSALGPGGLNRERAGFEVRDVHASHYGRICPIETPEGPNIGLITSLSSFAKINEFGFIETPYRIVRDGVVTDEIEYMTADVEEECVIAQASANLDEYNMFTDPVCWARYRGEAFEADTSTVTHMDVSPKQLVSIVTGLIPFLEHDDANRALMGSNMQRQAVPLLKTEAPIVGTGLEARAAKDSGAIVVAEEDGVVEYVDGYKVVVAAKHNPTLKRTYEFKKFLRSNSGTCINQRPLCSVGDIVVKGDVIADGPATDQGELALGKNILVAFMPWYGYNFEDAVIISEKLIKQDAYTSIYIEEFELTARDTKLGKEEITRDIPNVSEEVLANLGEDGIIRIGAEVKPGDILVGKITPKSETELAPEERLLRAIFGEKAADVKDASLTVPPGTEGVVMDVKVFSRKDRLSKSDDELVEEAVHLKDLQKGYKNQISVLKTEYREKLGALLLNEKAPASIIHRRTADILVQEGTVFDQETIELLEQESLVDLLMPPCDMYDVLKNLLSDYETSLQRLEVNYKTEVEHIREGDADLDHGVIRQVKVYVASKRKLQVGDKMAGRHGNKGVVSKIVPEADMPYLANGETIQMILNPLGVPSRMNLGQVLETHLGYAAKTAGIHVKTPVFEGFPESRIWDMMIEQGLPADGKSYLYDGKTGERFDNTVVIGYIYMLKLSHLIADKIHARSIGPYSLVTQQPLGGKAQMGGQRFGEMEVWALEAYGVAHMLQEILTVKSDDVSGRTRIYESIVKGENLLKSGTPESFNVLIKEMQGLGLDVRPMVVDA</sequence>
<feature type="chain" id="PRO_0000300297" description="DNA-directed RNA polymerase subunit beta">
    <location>
        <begin position="1"/>
        <end position="1252"/>
    </location>
</feature>
<keyword id="KW-0240">DNA-directed RNA polymerase</keyword>
<keyword id="KW-0548">Nucleotidyltransferase</keyword>
<keyword id="KW-0804">Transcription</keyword>
<keyword id="KW-0808">Transferase</keyword>
<protein>
    <recommendedName>
        <fullName evidence="1">DNA-directed RNA polymerase subunit beta</fullName>
        <shortName evidence="1">RNAP subunit beta</shortName>
        <ecNumber evidence="1">2.7.7.6</ecNumber>
    </recommendedName>
    <alternativeName>
        <fullName evidence="1">RNA polymerase subunit beta</fullName>
    </alternativeName>
    <alternativeName>
        <fullName evidence="1">Transcriptase subunit beta</fullName>
    </alternativeName>
</protein>
<gene>
    <name evidence="1" type="primary">rpoB</name>
    <name type="ordered locus">CF0320</name>
</gene>
<proteinExistence type="inferred from homology"/>